<organism>
    <name type="scientific">Arabidopsis thaliana</name>
    <name type="common">Mouse-ear cress</name>
    <dbReference type="NCBI Taxonomy" id="3702"/>
    <lineage>
        <taxon>Eukaryota</taxon>
        <taxon>Viridiplantae</taxon>
        <taxon>Streptophyta</taxon>
        <taxon>Embryophyta</taxon>
        <taxon>Tracheophyta</taxon>
        <taxon>Spermatophyta</taxon>
        <taxon>Magnoliopsida</taxon>
        <taxon>eudicotyledons</taxon>
        <taxon>Gunneridae</taxon>
        <taxon>Pentapetalae</taxon>
        <taxon>rosids</taxon>
        <taxon>malvids</taxon>
        <taxon>Brassicales</taxon>
        <taxon>Brassicaceae</taxon>
        <taxon>Camelineae</taxon>
        <taxon>Arabidopsis</taxon>
    </lineage>
</organism>
<protein>
    <recommendedName>
        <fullName evidence="17">Serine/threonine-protein kinase-like protein ACR4</fullName>
        <ecNumber evidence="7 9">2.7.11.1</ecNumber>
    </recommendedName>
    <alternativeName>
        <fullName evidence="17">Protein CRINKLY 4</fullName>
        <shortName evidence="17">AtCR4</shortName>
    </alternativeName>
</protein>
<sequence>MRMFETRAREWILLVKLVLFTSIWQLASALGSMSSIAISYGEGGSVFCGLKSDGSHLVVCYGSNSAILYGTPGHLQFIGLTGGDGFMCGLLMLSHQPYCWGNSAFIQMGVPQPMTKGAEYLEVSAGDYHLCGLRKPIVGRRKNSNIISSSLVDCWGYNMTRNFVFDKQLHSLSAGSEFNCALSSKDKSVFCWGDENSSQVISLIPKEKKFQKIAAGGYHVCGILDGLESRVLCWGKSLEFEEEVTGTSTEEKILDLPPKEPLLAVVGGKFYACGIKRYDHSAVCWGFFVNRSTPAPTGIGFYDLAAGNYFTCGVLTGTSMSPVCWGLGFPASIPLAVSPGLCIDTPCPPGTHELSNQENSPCKFTGSHICLPCSTSCPPGMYQKSVCTERSDQVCVYNCSSCSSHDCSSNCSSSATSGGKEKGKFWSLQLPIATAEIGFALFLVAVVSITAALYIRYRLRNCRCSENDTRSSKDSAFTKDNGKIRPDLDELQKRRRARVFTYEELEKAADGFKEESIVGKGSFSCVYKGVLRDGTTVAVKRAIMSSDKQKNSNEFRTELDLLSRLNHAHLLSLLGYCEECGERLLVYEFMAHGSLHNHLHGKNKALKEQLDWVKRVTIAVQAARGIEYLHGYACPPVIHRDIKSSNILIDEEHNARVADFGLSLLGPVDSGSPLAELPAGTLGYLDPEYYRLHYLTTKSDVYSFGVLLLEILSGRKAIDMHYEEGNIVEWAVPLIKAGDINALLDPVLKHPSEIEALKRIVSVACKCVRMRGKDRPSMDKVTTALERALAQLMGNPSSEQPILPTEVVLGSSRMHKKSWRIGSKRSGSENTEFRGGSWITFPSVTSSQRRKSSASEGDVAEEEDEGRKQQEALRSLEEEIGPASPGQSLFLHHNF</sequence>
<keyword id="KW-0002">3D-structure</keyword>
<keyword id="KW-0067">ATP-binding</keyword>
<keyword id="KW-1003">Cell membrane</keyword>
<keyword id="KW-0217">Developmental protein</keyword>
<keyword id="KW-1015">Disulfide bond</keyword>
<keyword id="KW-0967">Endosome</keyword>
<keyword id="KW-0325">Glycoprotein</keyword>
<keyword id="KW-0418">Kinase</keyword>
<keyword id="KW-0472">Membrane</keyword>
<keyword id="KW-0547">Nucleotide-binding</keyword>
<keyword id="KW-0597">Phosphoprotein</keyword>
<keyword id="KW-0675">Receptor</keyword>
<keyword id="KW-1185">Reference proteome</keyword>
<keyword id="KW-0677">Repeat</keyword>
<keyword id="KW-0723">Serine/threonine-protein kinase</keyword>
<keyword id="KW-0732">Signal</keyword>
<keyword id="KW-0808">Transferase</keyword>
<keyword id="KW-0812">Transmembrane</keyword>
<keyword id="KW-1133">Transmembrane helix</keyword>
<gene>
    <name evidence="17" type="primary">ACR4</name>
    <name evidence="19" type="ordered locus">At3g59420</name>
    <name evidence="20" type="ORF">F25L23.280</name>
</gene>
<reference key="1">
    <citation type="journal article" date="2002" name="Plant Cell Physiol.">
        <title>ACR4, a putative receptor kinase gene of Arabidopsis thaliana, that is expressed in the outer cell layers of embryos and plants, is involved in proper embryogenesis.</title>
        <authorList>
            <person name="Tanaka H."/>
            <person name="Watanabe M."/>
            <person name="Watanabe D."/>
            <person name="Tanaka T."/>
            <person name="Machida C."/>
            <person name="Machida Y."/>
        </authorList>
    </citation>
    <scope>NUCLEOTIDE SEQUENCE [MRNA]</scope>
    <scope>FUNCTION</scope>
    <scope>DISRUPTION PHENOTYPE</scope>
    <scope>TISSUE SPECIFICITY</scope>
    <scope>DEVELOPMENTAL STAGE</scope>
    <scope>SUBCELLULAR LOCATION</scope>
    <source>
        <strain>cv. Columbia</strain>
    </source>
</reference>
<reference key="2">
    <citation type="journal article" date="2000" name="Nature">
        <title>Sequence and analysis of chromosome 3 of the plant Arabidopsis thaliana.</title>
        <authorList>
            <person name="Salanoubat M."/>
            <person name="Lemcke K."/>
            <person name="Rieger M."/>
            <person name="Ansorge W."/>
            <person name="Unseld M."/>
            <person name="Fartmann B."/>
            <person name="Valle G."/>
            <person name="Bloecker H."/>
            <person name="Perez-Alonso M."/>
            <person name="Obermaier B."/>
            <person name="Delseny M."/>
            <person name="Boutry M."/>
            <person name="Grivell L.A."/>
            <person name="Mache R."/>
            <person name="Puigdomenech P."/>
            <person name="De Simone V."/>
            <person name="Choisne N."/>
            <person name="Artiguenave F."/>
            <person name="Robert C."/>
            <person name="Brottier P."/>
            <person name="Wincker P."/>
            <person name="Cattolico L."/>
            <person name="Weissenbach J."/>
            <person name="Saurin W."/>
            <person name="Quetier F."/>
            <person name="Schaefer M."/>
            <person name="Mueller-Auer S."/>
            <person name="Gabel C."/>
            <person name="Fuchs M."/>
            <person name="Benes V."/>
            <person name="Wurmbach E."/>
            <person name="Drzonek H."/>
            <person name="Erfle H."/>
            <person name="Jordan N."/>
            <person name="Bangert S."/>
            <person name="Wiedelmann R."/>
            <person name="Kranz H."/>
            <person name="Voss H."/>
            <person name="Holland R."/>
            <person name="Brandt P."/>
            <person name="Nyakatura G."/>
            <person name="Vezzi A."/>
            <person name="D'Angelo M."/>
            <person name="Pallavicini A."/>
            <person name="Toppo S."/>
            <person name="Simionati B."/>
            <person name="Conrad A."/>
            <person name="Hornischer K."/>
            <person name="Kauer G."/>
            <person name="Loehnert T.-H."/>
            <person name="Nordsiek G."/>
            <person name="Reichelt J."/>
            <person name="Scharfe M."/>
            <person name="Schoen O."/>
            <person name="Bargues M."/>
            <person name="Terol J."/>
            <person name="Climent J."/>
            <person name="Navarro P."/>
            <person name="Collado C."/>
            <person name="Perez-Perez A."/>
            <person name="Ottenwaelder B."/>
            <person name="Duchemin D."/>
            <person name="Cooke R."/>
            <person name="Laudie M."/>
            <person name="Berger-Llauro C."/>
            <person name="Purnelle B."/>
            <person name="Masuy D."/>
            <person name="de Haan M."/>
            <person name="Maarse A.C."/>
            <person name="Alcaraz J.-P."/>
            <person name="Cottet A."/>
            <person name="Casacuberta E."/>
            <person name="Monfort A."/>
            <person name="Argiriou A."/>
            <person name="Flores M."/>
            <person name="Liguori R."/>
            <person name="Vitale D."/>
            <person name="Mannhaupt G."/>
            <person name="Haase D."/>
            <person name="Schoof H."/>
            <person name="Rudd S."/>
            <person name="Zaccaria P."/>
            <person name="Mewes H.-W."/>
            <person name="Mayer K.F.X."/>
            <person name="Kaul S."/>
            <person name="Town C.D."/>
            <person name="Koo H.L."/>
            <person name="Tallon L.J."/>
            <person name="Jenkins J."/>
            <person name="Rooney T."/>
            <person name="Rizzo M."/>
            <person name="Walts A."/>
            <person name="Utterback T."/>
            <person name="Fujii C.Y."/>
            <person name="Shea T.P."/>
            <person name="Creasy T.H."/>
            <person name="Haas B."/>
            <person name="Maiti R."/>
            <person name="Wu D."/>
            <person name="Peterson J."/>
            <person name="Van Aken S."/>
            <person name="Pai G."/>
            <person name="Militscher J."/>
            <person name="Sellers P."/>
            <person name="Gill J.E."/>
            <person name="Feldblyum T.V."/>
            <person name="Preuss D."/>
            <person name="Lin X."/>
            <person name="Nierman W.C."/>
            <person name="Salzberg S.L."/>
            <person name="White O."/>
            <person name="Venter J.C."/>
            <person name="Fraser C.M."/>
            <person name="Kaneko T."/>
            <person name="Nakamura Y."/>
            <person name="Sato S."/>
            <person name="Kato T."/>
            <person name="Asamizu E."/>
            <person name="Sasamoto S."/>
            <person name="Kimura T."/>
            <person name="Idesawa K."/>
            <person name="Kawashima K."/>
            <person name="Kishida Y."/>
            <person name="Kiyokawa C."/>
            <person name="Kohara M."/>
            <person name="Matsumoto M."/>
            <person name="Matsuno A."/>
            <person name="Muraki A."/>
            <person name="Nakayama S."/>
            <person name="Nakazaki N."/>
            <person name="Shinpo S."/>
            <person name="Takeuchi C."/>
            <person name="Wada T."/>
            <person name="Watanabe A."/>
            <person name="Yamada M."/>
            <person name="Yasuda M."/>
            <person name="Tabata S."/>
        </authorList>
    </citation>
    <scope>NUCLEOTIDE SEQUENCE [LARGE SCALE GENOMIC DNA]</scope>
    <source>
        <strain>cv. Columbia</strain>
    </source>
</reference>
<reference key="3">
    <citation type="journal article" date="2017" name="Plant J.">
        <title>Araport11: a complete reannotation of the Arabidopsis thaliana reference genome.</title>
        <authorList>
            <person name="Cheng C.Y."/>
            <person name="Krishnakumar V."/>
            <person name="Chan A.P."/>
            <person name="Thibaud-Nissen F."/>
            <person name="Schobel S."/>
            <person name="Town C.D."/>
        </authorList>
    </citation>
    <scope>GENOME REANNOTATION</scope>
    <source>
        <strain>cv. Columbia</strain>
    </source>
</reference>
<reference key="4">
    <citation type="journal article" date="2003" name="Development">
        <title>The Arabidopsis ACR4 gene plays a role in cell layer organisation during ovule integument and sepal margin development.</title>
        <authorList>
            <person name="Gifford M.L."/>
            <person name="Dean S."/>
            <person name="Ingram G.C."/>
        </authorList>
    </citation>
    <scope>FUNCTION</scope>
    <scope>DISRUPTION PHENOTYPE</scope>
    <scope>CATALYTIC ACTIVITY</scope>
    <scope>MUTAGENESIS OF LYS-540</scope>
    <scope>SUBCELLULAR LOCATION</scope>
    <scope>DEVELOPMENTAL STAGE</scope>
</reference>
<reference key="5">
    <citation type="journal article" date="2004" name="Plant J.">
        <title>The ACR4 receptor-like kinase is required for surface formation of epidermis-related tissues in Arabidopsis thaliana.</title>
        <authorList>
            <person name="Watanabe M."/>
            <person name="Tanaka H."/>
            <person name="Watanabe D."/>
            <person name="Machida C."/>
            <person name="Machida Y."/>
        </authorList>
    </citation>
    <scope>FUNCTION</scope>
    <scope>DISRUPTION PHENOTYPE</scope>
    <scope>MUTAGENESIS OF LYS-540</scope>
    <scope>SUBCELLULAR LOCATION</scope>
</reference>
<reference key="6">
    <citation type="journal article" date="2005" name="Planta">
        <title>Molecular analysis of the CRINKLY4 gene family in Arabidopsis thaliana.</title>
        <authorList>
            <person name="Cao X."/>
            <person name="Li K."/>
            <person name="Suh S.-G."/>
            <person name="Guo T."/>
            <person name="Becraft P.W."/>
        </authorList>
    </citation>
    <scope>GENE FAMILY</scope>
    <scope>CATALYTIC ACTIVITY</scope>
    <scope>MUTAGENESIS OF LYS-540</scope>
    <scope>DEVELOPMENTAL STAGE</scope>
    <scope>TISSUE SPECIFICITY</scope>
</reference>
<reference key="7">
    <citation type="journal article" date="2005" name="Plant Cell">
        <title>ARABIDOPSIS CRINKLY4 function, internalization, and turnover are dependent on the extracellular crinkly repeat domain.</title>
        <authorList>
            <person name="Gifford M.L."/>
            <person name="Robertson F.C."/>
            <person name="Soares D.C."/>
            <person name="Ingram G.C."/>
        </authorList>
    </citation>
    <scope>FUNCTION</scope>
    <scope>MUTAGENESIS OF CYS-221</scope>
    <scope>SUBCELLULAR LOCATION</scope>
</reference>
<reference key="8">
    <citation type="journal article" date="2007" name="Development">
        <title>Novel receptor-like kinase ALE2 controls shoot development by specifying epidermis in Arabidopsis.</title>
        <authorList>
            <person name="Tanaka H."/>
            <person name="Watanabe M."/>
            <person name="Sasabe M."/>
            <person name="Hiroe T."/>
            <person name="Tanaka T."/>
            <person name="Tsukaya H."/>
            <person name="Ikezaki M."/>
            <person name="Machida C."/>
            <person name="Machida Y."/>
        </authorList>
    </citation>
    <scope>FUNCTION</scope>
    <scope>AUTOPHOSPHORYLATION</scope>
    <scope>PHOSPHORYLATION BY ALE2</scope>
</reference>
<reference key="9">
    <citation type="journal article" date="2008" name="Arch. Biochem. Biophys.">
        <title>Dimerization properties of the transmembrane domains of Arabidopsis CRINKLY4 receptor-like kinase and homologs.</title>
        <authorList>
            <person name="Stokes K.D."/>
            <person name="Gururaj Rao A."/>
        </authorList>
    </citation>
    <scope>HOMODIMERIZATION</scope>
    <scope>MUTAGENESIS OF ALA-433; GLY-438 AND ALA-452</scope>
</reference>
<reference key="10">
    <citation type="journal article" date="2008" name="Science">
        <title>Receptor-like kinase ACR4 restricts formative cell divisions in the Arabidopsis root.</title>
        <authorList>
            <person name="De Smet I."/>
            <person name="Vassileva V."/>
            <person name="De Rybel B."/>
            <person name="Levesque M.P."/>
            <person name="Grunewald W."/>
            <person name="Van Damme D."/>
            <person name="Van Noorden G."/>
            <person name="Naudts M."/>
            <person name="Van Isterdael G."/>
            <person name="De Clercq R."/>
            <person name="Wang J.Y."/>
            <person name="Meuli N."/>
            <person name="Vanneste S."/>
            <person name="Friml J."/>
            <person name="Hilson P."/>
            <person name="Juergens G."/>
            <person name="Ingram G.C."/>
            <person name="Inze D."/>
            <person name="Benfey P.N."/>
            <person name="Beeckman T."/>
        </authorList>
    </citation>
    <scope>FUNCTION</scope>
    <scope>DEVELOPMENTAL STAGE</scope>
</reference>
<reference key="11">
    <citation type="journal article" date="2009" name="Curr. Biol.">
        <title>A signaling module controlling the stem cell niche in Arabidopsis root meristems.</title>
        <authorList>
            <person name="Stahl Y."/>
            <person name="Wink R.H."/>
            <person name="Ingram G.C."/>
            <person name="Simon R."/>
        </authorList>
    </citation>
    <scope>FUNCTION</scope>
    <scope>INDUCTION BY CLE40</scope>
</reference>
<reference key="12">
    <citation type="journal article" date="2009" name="Mol. Plant">
        <title>Diverse transcriptional programs associated with environmental stress and hormones in the Arabidopsis receptor-like kinase gene family.</title>
        <authorList>
            <person name="Chae L."/>
            <person name="Sudat S."/>
            <person name="Dudoit S."/>
            <person name="Zhu T."/>
            <person name="Luan S."/>
        </authorList>
    </citation>
    <scope>GENE FAMILY</scope>
</reference>
<reference key="13">
    <citation type="journal article" date="2010" name="Protoplasma">
        <title>CLE peptide signaling during plant development.</title>
        <authorList>
            <person name="Wang G."/>
            <person name="Fiers M."/>
        </authorList>
    </citation>
    <scope>REVIEW</scope>
</reference>
<reference key="14">
    <citation type="journal article" date="2014" name="Plant Physiol.">
        <title>Endomembrane trafficking protein SEC24A regulates cell size patterning in Arabidopsis.</title>
        <authorList>
            <person name="Qu X."/>
            <person name="Chatty P.R."/>
            <person name="Roeder A.H.K."/>
        </authorList>
    </citation>
    <scope>FUNCTION</scope>
    <scope>DISRUPTION PHENOTYPE</scope>
    <source>
        <strain>cv. Landsberg erecta</strain>
    </source>
</reference>
<reference key="15">
    <citation type="journal article" date="2016" name="Proc. Natl. Acad. Sci. U.S.A.">
        <title>PP2A-3 interacts with ACR4 and regulates formative cell division in the Arabidopsis root.</title>
        <authorList>
            <person name="Yue K."/>
            <person name="Sandal P."/>
            <person name="Williams E.L."/>
            <person name="Murphy E."/>
            <person name="Stes E."/>
            <person name="Nikonorova N."/>
            <person name="Ramakrishna P."/>
            <person name="Czyzewicz N."/>
            <person name="Montero-Morales L."/>
            <person name="Kumpf R."/>
            <person name="Lin Z."/>
            <person name="van de Cotte B."/>
            <person name="Iqbal M."/>
            <person name="Van Bel M."/>
            <person name="Van De Slijke E."/>
            <person name="Meyer M.R."/>
            <person name="Gadeyne A."/>
            <person name="Zipfel C."/>
            <person name="De Jaeger G."/>
            <person name="Van Montagu M."/>
            <person name="Van Damme D."/>
            <person name="Gevaert K."/>
            <person name="Rao A.G."/>
            <person name="Beeckman T."/>
            <person name="De Smet I."/>
        </authorList>
    </citation>
    <scope>INTERACTION WITH PP2A3</scope>
    <scope>PHOSPHORYLATION AT SER-475</scope>
</reference>
<accession>Q9LX29</accession>
<feature type="signal peptide" evidence="1">
    <location>
        <begin position="1"/>
        <end position="29"/>
    </location>
</feature>
<feature type="chain" id="PRO_0000382750" description="Serine/threonine-protein kinase-like protein ACR4">
    <location>
        <begin position="30"/>
        <end position="895"/>
    </location>
</feature>
<feature type="topological domain" description="Extracellular" evidence="1">
    <location>
        <begin position="30"/>
        <end position="434"/>
    </location>
</feature>
<feature type="transmembrane region" description="Helical" evidence="1">
    <location>
        <begin position="435"/>
        <end position="455"/>
    </location>
</feature>
<feature type="topological domain" description="Cytoplasmic" evidence="1">
    <location>
        <begin position="456"/>
        <end position="895"/>
    </location>
</feature>
<feature type="repeat" description="1">
    <location>
        <begin position="38"/>
        <end position="73"/>
    </location>
</feature>
<feature type="repeat" description="2">
    <location>
        <begin position="77"/>
        <end position="112"/>
    </location>
</feature>
<feature type="repeat" description="3">
    <location>
        <begin position="130"/>
        <end position="167"/>
    </location>
</feature>
<feature type="repeat" description="4">
    <location>
        <begin position="169"/>
        <end position="202"/>
    </location>
</feature>
<feature type="repeat" description="5">
    <location>
        <begin position="210"/>
        <end position="245"/>
    </location>
</feature>
<feature type="repeat" description="6">
    <location>
        <begin position="262"/>
        <end position="296"/>
    </location>
</feature>
<feature type="repeat" description="7">
    <location>
        <begin position="301"/>
        <end position="339"/>
    </location>
</feature>
<feature type="repeat" description="TNFR-Cys">
    <location>
        <begin position="346"/>
        <end position="395"/>
    </location>
</feature>
<feature type="domain" description="Protein kinase" evidence="2">
    <location>
        <begin position="512"/>
        <end position="789"/>
    </location>
</feature>
<feature type="region of interest" description="7 X 36 AA repeats">
    <location>
        <begin position="38"/>
        <end position="339"/>
    </location>
</feature>
<feature type="region of interest" description="Disordered" evidence="5">
    <location>
        <begin position="818"/>
        <end position="895"/>
    </location>
</feature>
<feature type="compositionally biased region" description="Basic and acidic residues" evidence="5">
    <location>
        <begin position="865"/>
        <end position="877"/>
    </location>
</feature>
<feature type="active site" description="Proton acceptor" evidence="2 4">
    <location>
        <position position="641"/>
    </location>
</feature>
<feature type="binding site" evidence="2">
    <location>
        <begin position="518"/>
        <end position="526"/>
    </location>
    <ligand>
        <name>ATP</name>
        <dbReference type="ChEBI" id="CHEBI:30616"/>
    </ligand>
</feature>
<feature type="binding site" evidence="18">
    <location>
        <position position="540"/>
    </location>
    <ligand>
        <name>ATP</name>
        <dbReference type="ChEBI" id="CHEBI:30616"/>
    </ligand>
</feature>
<feature type="modified residue" description="Phosphoserine">
    <location>
        <position position="475"/>
    </location>
</feature>
<feature type="glycosylation site" description="N-linked (GlcNAc...) asparagine" evidence="1">
    <location>
        <position position="158"/>
    </location>
</feature>
<feature type="glycosylation site" description="N-linked (GlcNAc...) asparagine" evidence="1">
    <location>
        <position position="196"/>
    </location>
</feature>
<feature type="glycosylation site" description="N-linked (GlcNAc...) asparagine" evidence="1">
    <location>
        <position position="290"/>
    </location>
</feature>
<feature type="glycosylation site" description="N-linked (GlcNAc...) asparagine" evidence="1">
    <location>
        <position position="398"/>
    </location>
</feature>
<feature type="glycosylation site" description="N-linked (GlcNAc...) asparagine" evidence="1">
    <location>
        <position position="410"/>
    </location>
</feature>
<feature type="disulfide bond" evidence="3">
    <location>
        <begin position="347"/>
        <end position="370"/>
    </location>
</feature>
<feature type="disulfide bond" evidence="3">
    <location>
        <begin position="373"/>
        <end position="387"/>
    </location>
</feature>
<feature type="disulfide bond" evidence="3">
    <location>
        <begin position="377"/>
        <end position="395"/>
    </location>
</feature>
<feature type="mutagenesis site" description="In acr4-7; abnormal embryogenesis, and reduced internalization into vesicles." evidence="10">
    <original>C</original>
    <variation>Y</variation>
    <location>
        <position position="221"/>
    </location>
</feature>
<feature type="mutagenesis site" description="Enhanced dimerization." evidence="12">
    <original>A</original>
    <variation>F</variation>
    <location>
        <position position="433"/>
    </location>
</feature>
<feature type="mutagenesis site" description="Enhanced dimerization." evidence="12">
    <original>G</original>
    <variation>V</variation>
    <location>
        <position position="438"/>
    </location>
</feature>
<feature type="mutagenesis site" description="Unchanged dimerization." evidence="12">
    <original>A</original>
    <variation>C</variation>
    <location>
        <position position="452"/>
    </location>
</feature>
<feature type="mutagenesis site" description="Loss of kinase activity." evidence="7 8 9">
    <original>K</original>
    <variation>L</variation>
    <variation>M</variation>
    <variation>W</variation>
    <location>
        <position position="540"/>
    </location>
</feature>
<name>ACR4L_ARATH</name>
<proteinExistence type="evidence at protein level"/>
<evidence type="ECO:0000255" key="1"/>
<evidence type="ECO:0000255" key="2">
    <source>
        <dbReference type="PROSITE-ProRule" id="PRU00159"/>
    </source>
</evidence>
<evidence type="ECO:0000255" key="3">
    <source>
        <dbReference type="PROSITE-ProRule" id="PRU00206"/>
    </source>
</evidence>
<evidence type="ECO:0000255" key="4">
    <source>
        <dbReference type="PROSITE-ProRule" id="PRU10027"/>
    </source>
</evidence>
<evidence type="ECO:0000256" key="5">
    <source>
        <dbReference type="SAM" id="MobiDB-lite"/>
    </source>
</evidence>
<evidence type="ECO:0000269" key="6">
    <source>
    </source>
</evidence>
<evidence type="ECO:0000269" key="7">
    <source>
    </source>
</evidence>
<evidence type="ECO:0000269" key="8">
    <source>
    </source>
</evidence>
<evidence type="ECO:0000269" key="9">
    <source>
    </source>
</evidence>
<evidence type="ECO:0000269" key="10">
    <source>
    </source>
</evidence>
<evidence type="ECO:0000269" key="11">
    <source>
    </source>
</evidence>
<evidence type="ECO:0000269" key="12">
    <source>
    </source>
</evidence>
<evidence type="ECO:0000269" key="13">
    <source>
    </source>
</evidence>
<evidence type="ECO:0000269" key="14">
    <source>
    </source>
</evidence>
<evidence type="ECO:0000269" key="15">
    <source>
    </source>
</evidence>
<evidence type="ECO:0000269" key="16">
    <source>
    </source>
</evidence>
<evidence type="ECO:0000303" key="17">
    <source>
    </source>
</evidence>
<evidence type="ECO:0000305" key="18"/>
<evidence type="ECO:0000312" key="19">
    <source>
        <dbReference type="Araport" id="AT3G59420"/>
    </source>
</evidence>
<evidence type="ECO:0000312" key="20">
    <source>
        <dbReference type="EMBL" id="CAB91612.1"/>
    </source>
</evidence>
<dbReference type="EC" id="2.7.11.1" evidence="7 9"/>
<dbReference type="EMBL" id="AB074762">
    <property type="protein sequence ID" value="BAB91132.1"/>
    <property type="molecule type" value="mRNA"/>
</dbReference>
<dbReference type="EMBL" id="AL356014">
    <property type="protein sequence ID" value="CAB91612.1"/>
    <property type="molecule type" value="Genomic_DNA"/>
</dbReference>
<dbReference type="EMBL" id="CP002686">
    <property type="protein sequence ID" value="AEE79920.1"/>
    <property type="molecule type" value="Genomic_DNA"/>
</dbReference>
<dbReference type="PIR" id="T49010">
    <property type="entry name" value="T49010"/>
</dbReference>
<dbReference type="RefSeq" id="NP_191501.1">
    <property type="nucleotide sequence ID" value="NM_115804.4"/>
</dbReference>
<dbReference type="PDB" id="7A0J">
    <property type="method" value="X-ray"/>
    <property type="resolution" value="1.95 A"/>
    <property type="chains" value="AAA/BBB/CCC/DDD=30-335"/>
</dbReference>
<dbReference type="PDBsum" id="7A0J"/>
<dbReference type="SMR" id="Q9LX29"/>
<dbReference type="BioGRID" id="10426">
    <property type="interactions" value="2"/>
</dbReference>
<dbReference type="FunCoup" id="Q9LX29">
    <property type="interactions" value="1356"/>
</dbReference>
<dbReference type="STRING" id="3702.Q9LX29"/>
<dbReference type="GlyCosmos" id="Q9LX29">
    <property type="glycosylation" value="5 sites, No reported glycans"/>
</dbReference>
<dbReference type="GlyGen" id="Q9LX29">
    <property type="glycosylation" value="5 sites"/>
</dbReference>
<dbReference type="iPTMnet" id="Q9LX29"/>
<dbReference type="PaxDb" id="3702-AT3G59420.1"/>
<dbReference type="ProteomicsDB" id="244760"/>
<dbReference type="EnsemblPlants" id="AT3G59420.1">
    <property type="protein sequence ID" value="AT3G59420.1"/>
    <property type="gene ID" value="AT3G59420"/>
</dbReference>
<dbReference type="GeneID" id="825111"/>
<dbReference type="Gramene" id="AT3G59420.1">
    <property type="protein sequence ID" value="AT3G59420.1"/>
    <property type="gene ID" value="AT3G59420"/>
</dbReference>
<dbReference type="KEGG" id="ath:AT3G59420"/>
<dbReference type="Araport" id="AT3G59420"/>
<dbReference type="TAIR" id="AT3G59420">
    <property type="gene designation" value="CR4"/>
</dbReference>
<dbReference type="eggNOG" id="ENOG502QUN0">
    <property type="taxonomic scope" value="Eukaryota"/>
</dbReference>
<dbReference type="HOGENOM" id="CLU_009948_0_0_1"/>
<dbReference type="InParanoid" id="Q9LX29"/>
<dbReference type="OMA" id="TPAHFPF"/>
<dbReference type="PhylomeDB" id="Q9LX29"/>
<dbReference type="PRO" id="PR:Q9LX29"/>
<dbReference type="Proteomes" id="UP000006548">
    <property type="component" value="Chromosome 3"/>
</dbReference>
<dbReference type="ExpressionAtlas" id="Q9LX29">
    <property type="expression patterns" value="baseline and differential"/>
</dbReference>
<dbReference type="GO" id="GO:0009986">
    <property type="term" value="C:cell surface"/>
    <property type="evidence" value="ECO:0000314"/>
    <property type="project" value="TAIR"/>
</dbReference>
<dbReference type="GO" id="GO:0030139">
    <property type="term" value="C:endocytic vesicle"/>
    <property type="evidence" value="ECO:0000314"/>
    <property type="project" value="TAIR"/>
</dbReference>
<dbReference type="GO" id="GO:0032585">
    <property type="term" value="C:multivesicular body membrane"/>
    <property type="evidence" value="ECO:0007669"/>
    <property type="project" value="UniProtKB-SubCell"/>
</dbReference>
<dbReference type="GO" id="GO:0005886">
    <property type="term" value="C:plasma membrane"/>
    <property type="evidence" value="ECO:0000314"/>
    <property type="project" value="TAIR"/>
</dbReference>
<dbReference type="GO" id="GO:0005524">
    <property type="term" value="F:ATP binding"/>
    <property type="evidence" value="ECO:0007669"/>
    <property type="project" value="UniProtKB-KW"/>
</dbReference>
<dbReference type="GO" id="GO:0042803">
    <property type="term" value="F:protein homodimerization activity"/>
    <property type="evidence" value="ECO:0000314"/>
    <property type="project" value="UniProtKB"/>
</dbReference>
<dbReference type="GO" id="GO:0106310">
    <property type="term" value="F:protein serine kinase activity"/>
    <property type="evidence" value="ECO:0007669"/>
    <property type="project" value="RHEA"/>
</dbReference>
<dbReference type="GO" id="GO:0004674">
    <property type="term" value="F:protein serine/threonine kinase activity"/>
    <property type="evidence" value="ECO:0007669"/>
    <property type="project" value="UniProtKB-KW"/>
</dbReference>
<dbReference type="GO" id="GO:0019199">
    <property type="term" value="F:transmembrane receptor protein kinase activity"/>
    <property type="evidence" value="ECO:0000250"/>
    <property type="project" value="TAIR"/>
</dbReference>
<dbReference type="GO" id="GO:0009793">
    <property type="term" value="P:embryo development ending in seed dormancy"/>
    <property type="evidence" value="ECO:0000315"/>
    <property type="project" value="TAIR"/>
</dbReference>
<dbReference type="GO" id="GO:0048439">
    <property type="term" value="P:flower morphogenesis"/>
    <property type="evidence" value="ECO:0007669"/>
    <property type="project" value="EnsemblPlants"/>
</dbReference>
<dbReference type="GO" id="GO:0010311">
    <property type="term" value="P:lateral root formation"/>
    <property type="evidence" value="ECO:0000315"/>
    <property type="project" value="TAIR"/>
</dbReference>
<dbReference type="GO" id="GO:0032877">
    <property type="term" value="P:positive regulation of DNA endoreduplication"/>
    <property type="evidence" value="ECO:0000315"/>
    <property type="project" value="UniProtKB"/>
</dbReference>
<dbReference type="GO" id="GO:0009786">
    <property type="term" value="P:regulation of asymmetric cell division"/>
    <property type="evidence" value="ECO:0000315"/>
    <property type="project" value="TAIR"/>
</dbReference>
<dbReference type="GO" id="GO:0048829">
    <property type="term" value="P:root cap development"/>
    <property type="evidence" value="ECO:0000315"/>
    <property type="project" value="TAIR"/>
</dbReference>
<dbReference type="GO" id="GO:0048364">
    <property type="term" value="P:root development"/>
    <property type="evidence" value="ECO:0000315"/>
    <property type="project" value="TAIR"/>
</dbReference>
<dbReference type="GO" id="GO:0090392">
    <property type="term" value="P:sepal giant cell differentiation"/>
    <property type="evidence" value="ECO:0000315"/>
    <property type="project" value="UniProtKB"/>
</dbReference>
<dbReference type="CDD" id="cd14066">
    <property type="entry name" value="STKc_IRAK"/>
    <property type="match status" value="1"/>
</dbReference>
<dbReference type="FunFam" id="1.10.510.10:FF:000477">
    <property type="entry name" value="Receptor protein kinase CRINKLY4"/>
    <property type="match status" value="1"/>
</dbReference>
<dbReference type="FunFam" id="3.30.200.20:FF:000357">
    <property type="entry name" value="serine/threonine-protein kinase-like protein CCR1"/>
    <property type="match status" value="1"/>
</dbReference>
<dbReference type="FunFam" id="2.130.10.30:FF:000044">
    <property type="entry name" value="Serine/threonine-protein kinase-like protein CR4"/>
    <property type="match status" value="1"/>
</dbReference>
<dbReference type="Gene3D" id="3.30.200.20">
    <property type="entry name" value="Phosphorylase Kinase, domain 1"/>
    <property type="match status" value="1"/>
</dbReference>
<dbReference type="Gene3D" id="2.130.10.30">
    <property type="entry name" value="Regulator of chromosome condensation 1/beta-lactamase-inhibitor protein II"/>
    <property type="match status" value="2"/>
</dbReference>
<dbReference type="Gene3D" id="1.10.510.10">
    <property type="entry name" value="Transferase(Phosphotransferase) domain 1"/>
    <property type="match status" value="1"/>
</dbReference>
<dbReference type="InterPro" id="IPR011009">
    <property type="entry name" value="Kinase-like_dom_sf"/>
</dbReference>
<dbReference type="InterPro" id="IPR000719">
    <property type="entry name" value="Prot_kinase_dom"/>
</dbReference>
<dbReference type="InterPro" id="IPR017441">
    <property type="entry name" value="Protein_kinase_ATP_BS"/>
</dbReference>
<dbReference type="InterPro" id="IPR009091">
    <property type="entry name" value="RCC1/BLIP-II"/>
</dbReference>
<dbReference type="InterPro" id="IPR008271">
    <property type="entry name" value="Ser/Thr_kinase_AS"/>
</dbReference>
<dbReference type="InterPro" id="IPR001368">
    <property type="entry name" value="TNFR/NGFR_Cys_rich_reg"/>
</dbReference>
<dbReference type="PANTHER" id="PTHR47460">
    <property type="entry name" value="SERINE/THREONINE-PROTEIN KINASE-LIKE PROTEIN ACR4"/>
    <property type="match status" value="1"/>
</dbReference>
<dbReference type="PANTHER" id="PTHR47460:SF1">
    <property type="entry name" value="SERINE_THREONINE-PROTEIN KINASE-LIKE PROTEIN ACR4"/>
    <property type="match status" value="1"/>
</dbReference>
<dbReference type="Pfam" id="PF00069">
    <property type="entry name" value="Pkinase"/>
    <property type="match status" value="1"/>
</dbReference>
<dbReference type="Pfam" id="PF13540">
    <property type="entry name" value="RCC1_2"/>
    <property type="match status" value="1"/>
</dbReference>
<dbReference type="SMART" id="SM00220">
    <property type="entry name" value="S_TKc"/>
    <property type="match status" value="1"/>
</dbReference>
<dbReference type="SMART" id="SM00208">
    <property type="entry name" value="TNFR"/>
    <property type="match status" value="1"/>
</dbReference>
<dbReference type="SUPFAM" id="SSF56112">
    <property type="entry name" value="Protein kinase-like (PK-like)"/>
    <property type="match status" value="1"/>
</dbReference>
<dbReference type="SUPFAM" id="SSF50985">
    <property type="entry name" value="RCC1/BLIP-II"/>
    <property type="match status" value="1"/>
</dbReference>
<dbReference type="PROSITE" id="PS00107">
    <property type="entry name" value="PROTEIN_KINASE_ATP"/>
    <property type="match status" value="1"/>
</dbReference>
<dbReference type="PROSITE" id="PS50011">
    <property type="entry name" value="PROTEIN_KINASE_DOM"/>
    <property type="match status" value="1"/>
</dbReference>
<dbReference type="PROSITE" id="PS00108">
    <property type="entry name" value="PROTEIN_KINASE_ST"/>
    <property type="match status" value="1"/>
</dbReference>
<dbReference type="PROSITE" id="PS50050">
    <property type="entry name" value="TNFR_NGFR_2"/>
    <property type="match status" value="1"/>
</dbReference>
<comment type="function">
    <text evidence="6 7 8 10 11 13 14 15">Controls formative cell division in meristems, including root tips and lateral root initiation zones of the pericycle, in response to CLE40 signal. Acts with CLE40p peptide as a ligand-receptor pair in a signal transduction pathway, coordinating movement of the root tip and organization of cell divisions in the root meristem. Required during embryogenesis and development, probably for the differentiation of protoderm and epidermal cells. Involved in the regulation of cellular organization during the development of sepal margins and ovule integument outgrowth and promotes giant cell formation (PubMed:25315606). Can phosphorylate ALE2.</text>
</comment>
<comment type="catalytic activity">
    <reaction evidence="7 9">
        <text>L-seryl-[protein] + ATP = O-phospho-L-seryl-[protein] + ADP + H(+)</text>
        <dbReference type="Rhea" id="RHEA:17989"/>
        <dbReference type="Rhea" id="RHEA-COMP:9863"/>
        <dbReference type="Rhea" id="RHEA-COMP:11604"/>
        <dbReference type="ChEBI" id="CHEBI:15378"/>
        <dbReference type="ChEBI" id="CHEBI:29999"/>
        <dbReference type="ChEBI" id="CHEBI:30616"/>
        <dbReference type="ChEBI" id="CHEBI:83421"/>
        <dbReference type="ChEBI" id="CHEBI:456216"/>
        <dbReference type="EC" id="2.7.11.1"/>
    </reaction>
</comment>
<comment type="catalytic activity">
    <reaction evidence="7 9">
        <text>L-threonyl-[protein] + ATP = O-phospho-L-threonyl-[protein] + ADP + H(+)</text>
        <dbReference type="Rhea" id="RHEA:46608"/>
        <dbReference type="Rhea" id="RHEA-COMP:11060"/>
        <dbReference type="Rhea" id="RHEA-COMP:11605"/>
        <dbReference type="ChEBI" id="CHEBI:15378"/>
        <dbReference type="ChEBI" id="CHEBI:30013"/>
        <dbReference type="ChEBI" id="CHEBI:30616"/>
        <dbReference type="ChEBI" id="CHEBI:61977"/>
        <dbReference type="ChEBI" id="CHEBI:456216"/>
        <dbReference type="EC" id="2.7.11.1"/>
    </reaction>
</comment>
<comment type="subunit">
    <text evidence="16 18">Homodimer (Probable). Interacts with PP2A3 (PubMed:26792519).</text>
</comment>
<comment type="subcellular location">
    <subcellularLocation>
        <location>Cell membrane</location>
        <topology>Single-pass type I membrane protein</topology>
    </subcellularLocation>
    <subcellularLocation>
        <location>Endosome</location>
        <location>Multivesicular body membrane</location>
        <topology>Single-pass type I membrane protein</topology>
    </subcellularLocation>
    <text>Also localized into protein export bodies. Internalization may be involved in degradation of ACR4 for its rapid turn-over. In the epidermis, mostly expressed in the lateral and basal planes of cells.</text>
</comment>
<comment type="tissue specificity">
    <text evidence="6 9">Expressed in seedlings, floral buds, siliques, leaves, shoot apical meristems (SAM), and, to a lower extent, in roots.</text>
</comment>
<comment type="developmental stage">
    <text evidence="6 7 9 13">First observed in all young embryo cells. At the globular stage, restricted to apical region. Later confined to the protoderm area leading to cotyledon primordia and the root apex. In mature embryos, mostly localized in the L1 layer of the SAM, apical regions of cotyledons and the root apex, and, to a lower extent, in protoderm of other regions. In seedlings, expressed in developing tissues of the shoot, including the SAM and epidermis of organs primordia, especially in L1 layer cells. In roots, localized in quiescent center (QC) central cells, columella initials and cells below the QC, the lateral root cap (LRC) and the initial cells destined to give rise to the root epidermal cell file and the LRC. Expressed in epidermal emerged from under the LRC, with levels vanishing in elongation zone. Specifically detected in the small daughter cells after the first asymmetric pericycle cell division during lateral roots emergence. Subsequently, the expression expands to the adjacent small daughter cells from the second asymmetric cell division, resulting in a central core-specific expression pattern.</text>
</comment>
<comment type="induction">
    <text evidence="14">By CLE40 in root quiescent center (QC).</text>
</comment>
<comment type="PTM">
    <text evidence="11">Autophosphorylated and phosphorylated by ALE2.</text>
</comment>
<comment type="disruption phenotype">
    <text evidence="6 7 8 15">Reduced fertility due to abnormal embryogenesis and integument formation. Abnormal seed coat and leaves epidermis, with transient fusion between adjacent developing leaves and reduced hydrophobicity of leaf surfaces. Decreased numbers of giant cells in sepal epidermis of acr4-24 (PubMed:25315606).</text>
</comment>
<comment type="similarity">
    <text evidence="2">Belongs to the protein kinase superfamily. Ser/Thr protein kinase family.</text>
</comment>